<accession>C1ESN2</accession>
<feature type="chain" id="PRO_1000147593" description="Phosphatidylserine decarboxylase beta chain" evidence="1">
    <location>
        <begin position="1"/>
        <end position="225"/>
    </location>
</feature>
<feature type="chain" id="PRO_1000147594" description="Phosphatidylserine decarboxylase alpha chain" evidence="1">
    <location>
        <begin position="226"/>
        <end position="262"/>
    </location>
</feature>
<feature type="active site" description="Charge relay system; for autoendoproteolytic cleavage activity" evidence="1">
    <location>
        <position position="86"/>
    </location>
</feature>
<feature type="active site" description="Charge relay system; for autoendoproteolytic cleavage activity" evidence="1">
    <location>
        <position position="142"/>
    </location>
</feature>
<feature type="active site" description="Charge relay system; for autoendoproteolytic cleavage activity" evidence="1">
    <location>
        <position position="226"/>
    </location>
</feature>
<feature type="active site" description="Schiff-base intermediate with substrate; via pyruvic acid; for decarboxylase activity" evidence="1">
    <location>
        <position position="226"/>
    </location>
</feature>
<feature type="site" description="Cleavage (non-hydrolytic); by autocatalysis" evidence="1">
    <location>
        <begin position="225"/>
        <end position="226"/>
    </location>
</feature>
<feature type="modified residue" description="Pyruvic acid (Ser); by autocatalysis" evidence="1">
    <location>
        <position position="226"/>
    </location>
</feature>
<sequence>MRRTLYRLMIELTNGRFTSYILRKFAQSRLSSIIIPSYAKVFQINQDEMEKGLKEYRTLHELFTRKLKEGKRSIDTDASSIVSPVDGVFADYGPIEDAKTFDIKGKRYSIVDMLGNEERAQRYAGGTYMVIYLSPSHYHRIHSPLSGSVTERFVLGRKSYPVNAAGMEYGKEPLSKNYRSVTEVNSDGEHMALVKVGAMFVNSIELLHERDTVQKGEEMAYFTFGSTVVLLFEKDMIEVVQELKSGQELRLGEKIATRLAHK</sequence>
<keyword id="KW-1003">Cell membrane</keyword>
<keyword id="KW-0210">Decarboxylase</keyword>
<keyword id="KW-0444">Lipid biosynthesis</keyword>
<keyword id="KW-0443">Lipid metabolism</keyword>
<keyword id="KW-0456">Lyase</keyword>
<keyword id="KW-0472">Membrane</keyword>
<keyword id="KW-0594">Phospholipid biosynthesis</keyword>
<keyword id="KW-1208">Phospholipid metabolism</keyword>
<keyword id="KW-0670">Pyruvate</keyword>
<keyword id="KW-0865">Zymogen</keyword>
<dbReference type="EC" id="4.1.1.65" evidence="1"/>
<dbReference type="EMBL" id="CP001407">
    <property type="protein sequence ID" value="ACO28239.1"/>
    <property type="molecule type" value="Genomic_DNA"/>
</dbReference>
<dbReference type="RefSeq" id="WP_001255004.1">
    <property type="nucleotide sequence ID" value="NZ_CP009318.1"/>
</dbReference>
<dbReference type="SMR" id="C1ESN2"/>
<dbReference type="KEGG" id="bcx:BCA_4449"/>
<dbReference type="PATRIC" id="fig|572264.18.peg.4397"/>
<dbReference type="UniPathway" id="UPA00558">
    <property type="reaction ID" value="UER00616"/>
</dbReference>
<dbReference type="Proteomes" id="UP000002210">
    <property type="component" value="Chromosome"/>
</dbReference>
<dbReference type="GO" id="GO:0005886">
    <property type="term" value="C:plasma membrane"/>
    <property type="evidence" value="ECO:0007669"/>
    <property type="project" value="UniProtKB-SubCell"/>
</dbReference>
<dbReference type="GO" id="GO:0004609">
    <property type="term" value="F:phosphatidylserine decarboxylase activity"/>
    <property type="evidence" value="ECO:0007669"/>
    <property type="project" value="UniProtKB-UniRule"/>
</dbReference>
<dbReference type="GO" id="GO:0006646">
    <property type="term" value="P:phosphatidylethanolamine biosynthetic process"/>
    <property type="evidence" value="ECO:0007669"/>
    <property type="project" value="UniProtKB-UniRule"/>
</dbReference>
<dbReference type="HAMAP" id="MF_00662">
    <property type="entry name" value="PS_decarb_PSD_B_type1"/>
    <property type="match status" value="1"/>
</dbReference>
<dbReference type="InterPro" id="IPR003817">
    <property type="entry name" value="PS_Dcarbxylase"/>
</dbReference>
<dbReference type="InterPro" id="IPR033177">
    <property type="entry name" value="PSD-B"/>
</dbReference>
<dbReference type="InterPro" id="IPR033178">
    <property type="entry name" value="PSD_type1_pro"/>
</dbReference>
<dbReference type="NCBIfam" id="NF002853">
    <property type="entry name" value="PRK03140.1"/>
    <property type="match status" value="1"/>
</dbReference>
<dbReference type="NCBIfam" id="TIGR00163">
    <property type="entry name" value="PS_decarb"/>
    <property type="match status" value="1"/>
</dbReference>
<dbReference type="PANTHER" id="PTHR10067">
    <property type="entry name" value="PHOSPHATIDYLSERINE DECARBOXYLASE"/>
    <property type="match status" value="1"/>
</dbReference>
<dbReference type="PANTHER" id="PTHR10067:SF6">
    <property type="entry name" value="PHOSPHATIDYLSERINE DECARBOXYLASE PROENZYME, MITOCHONDRIAL"/>
    <property type="match status" value="1"/>
</dbReference>
<dbReference type="Pfam" id="PF02666">
    <property type="entry name" value="PS_Dcarbxylase"/>
    <property type="match status" value="1"/>
</dbReference>
<evidence type="ECO:0000255" key="1">
    <source>
        <dbReference type="HAMAP-Rule" id="MF_00662"/>
    </source>
</evidence>
<gene>
    <name evidence="1" type="primary">psd</name>
    <name type="ordered locus">BCA_4449</name>
</gene>
<organism>
    <name type="scientific">Bacillus cereus (strain 03BB102)</name>
    <dbReference type="NCBI Taxonomy" id="572264"/>
    <lineage>
        <taxon>Bacteria</taxon>
        <taxon>Bacillati</taxon>
        <taxon>Bacillota</taxon>
        <taxon>Bacilli</taxon>
        <taxon>Bacillales</taxon>
        <taxon>Bacillaceae</taxon>
        <taxon>Bacillus</taxon>
        <taxon>Bacillus cereus group</taxon>
    </lineage>
</organism>
<name>PSD_BACC3</name>
<proteinExistence type="inferred from homology"/>
<reference key="1">
    <citation type="submission" date="2009-02" db="EMBL/GenBank/DDBJ databases">
        <title>Genome sequence of Bacillus cereus 03BB102.</title>
        <authorList>
            <person name="Dodson R.J."/>
            <person name="Jackson P."/>
            <person name="Munk A.C."/>
            <person name="Brettin T."/>
            <person name="Bruce D."/>
            <person name="Detter C."/>
            <person name="Tapia R."/>
            <person name="Han C."/>
            <person name="Sutton G."/>
            <person name="Sims D."/>
        </authorList>
    </citation>
    <scope>NUCLEOTIDE SEQUENCE [LARGE SCALE GENOMIC DNA]</scope>
    <source>
        <strain>03BB102</strain>
    </source>
</reference>
<comment type="function">
    <text evidence="1">Catalyzes the formation of phosphatidylethanolamine (PtdEtn) from phosphatidylserine (PtdSer).</text>
</comment>
<comment type="catalytic activity">
    <reaction evidence="1">
        <text>a 1,2-diacyl-sn-glycero-3-phospho-L-serine + H(+) = a 1,2-diacyl-sn-glycero-3-phosphoethanolamine + CO2</text>
        <dbReference type="Rhea" id="RHEA:20828"/>
        <dbReference type="ChEBI" id="CHEBI:15378"/>
        <dbReference type="ChEBI" id="CHEBI:16526"/>
        <dbReference type="ChEBI" id="CHEBI:57262"/>
        <dbReference type="ChEBI" id="CHEBI:64612"/>
        <dbReference type="EC" id="4.1.1.65"/>
    </reaction>
</comment>
<comment type="cofactor">
    <cofactor evidence="1">
        <name>pyruvate</name>
        <dbReference type="ChEBI" id="CHEBI:15361"/>
    </cofactor>
    <text evidence="1">Binds 1 pyruvoyl group covalently per subunit.</text>
</comment>
<comment type="pathway">
    <text evidence="1">Phospholipid metabolism; phosphatidylethanolamine biosynthesis; phosphatidylethanolamine from CDP-diacylglycerol: step 2/2.</text>
</comment>
<comment type="subunit">
    <text evidence="1">Heterodimer of a large membrane-associated beta subunit and a small pyruvoyl-containing alpha subunit.</text>
</comment>
<comment type="subcellular location">
    <subcellularLocation>
        <location evidence="1">Cell membrane</location>
        <topology evidence="1">Peripheral membrane protein</topology>
    </subcellularLocation>
</comment>
<comment type="PTM">
    <text evidence="1">Is synthesized initially as an inactive proenzyme. Formation of the active enzyme involves a self-maturation process in which the active site pyruvoyl group is generated from an internal serine residue via an autocatalytic post-translational modification. Two non-identical subunits are generated from the proenzyme in this reaction, and the pyruvate is formed at the N-terminus of the alpha chain, which is derived from the carboxyl end of the proenzyme. The autoendoproteolytic cleavage occurs by a canonical serine protease mechanism, in which the side chain hydroxyl group of the serine supplies its oxygen atom to form the C-terminus of the beta chain, while the remainder of the serine residue undergoes an oxidative deamination to produce ammonia and the pyruvoyl prosthetic group on the alpha chain. During this reaction, the Ser that is part of the protease active site of the proenzyme becomes the pyruvoyl prosthetic group, which constitutes an essential element of the active site of the mature decarboxylase.</text>
</comment>
<comment type="similarity">
    <text evidence="1">Belongs to the phosphatidylserine decarboxylase family. PSD-B subfamily. Prokaryotic type I sub-subfamily.</text>
</comment>
<protein>
    <recommendedName>
        <fullName evidence="1">Phosphatidylserine decarboxylase proenzyme</fullName>
        <ecNumber evidence="1">4.1.1.65</ecNumber>
    </recommendedName>
    <component>
        <recommendedName>
            <fullName evidence="1">Phosphatidylserine decarboxylase alpha chain</fullName>
        </recommendedName>
    </component>
    <component>
        <recommendedName>
            <fullName evidence="1">Phosphatidylserine decarboxylase beta chain</fullName>
        </recommendedName>
    </component>
</protein>